<dbReference type="EC" id="3.4.22.-" evidence="6 8"/>
<dbReference type="EMBL" id="M94162">
    <property type="protein sequence ID" value="AAA29090.1"/>
    <property type="molecule type" value="Genomic_DNA"/>
</dbReference>
<dbReference type="EMBL" id="M64712">
    <property type="protein sequence ID" value="AAA29093.1"/>
    <property type="molecule type" value="mRNA"/>
</dbReference>
<dbReference type="EMBL" id="DS571232">
    <property type="protein sequence ID" value="EAL44770.2"/>
    <property type="molecule type" value="Genomic_DNA"/>
</dbReference>
<dbReference type="PIR" id="A23705">
    <property type="entry name" value="A23705"/>
</dbReference>
<dbReference type="RefSeq" id="XP_650156.2">
    <property type="nucleotide sequence ID" value="XM_645064.2"/>
</dbReference>
<dbReference type="SMR" id="Q01957"/>
<dbReference type="STRING" id="5759.C4M307"/>
<dbReference type="ChEMBL" id="CHEMBL3774301"/>
<dbReference type="MEROPS" id="C01.050"/>
<dbReference type="EnsemblProtists" id="rna_EHI_074180-1">
    <property type="protein sequence ID" value="rna_EHI_074180-1"/>
    <property type="gene ID" value="EHI_074180"/>
</dbReference>
<dbReference type="GeneID" id="3404457"/>
<dbReference type="KEGG" id="ehi:EHI_074180"/>
<dbReference type="VEuPathDB" id="AmoebaDB:EHI5A_238670"/>
<dbReference type="VEuPathDB" id="AmoebaDB:EHI7A_106950"/>
<dbReference type="VEuPathDB" id="AmoebaDB:EHI8A_050360"/>
<dbReference type="VEuPathDB" id="AmoebaDB:EHI_074180"/>
<dbReference type="VEuPathDB" id="AmoebaDB:KM1_218550"/>
<dbReference type="eggNOG" id="KOG1543">
    <property type="taxonomic scope" value="Eukaryota"/>
</dbReference>
<dbReference type="HOGENOM" id="CLU_012184_1_2_1"/>
<dbReference type="OMA" id="PRGKNFC"/>
<dbReference type="OrthoDB" id="10259130at2759"/>
<dbReference type="BRENDA" id="3.4.22.35">
    <property type="organism ID" value="2080"/>
</dbReference>
<dbReference type="Proteomes" id="UP000001926">
    <property type="component" value="Partially assembled WGS sequence"/>
</dbReference>
<dbReference type="GO" id="GO:0005615">
    <property type="term" value="C:extracellular space"/>
    <property type="evidence" value="ECO:0000318"/>
    <property type="project" value="GO_Central"/>
</dbReference>
<dbReference type="GO" id="GO:0005764">
    <property type="term" value="C:lysosome"/>
    <property type="evidence" value="ECO:0000318"/>
    <property type="project" value="GO_Central"/>
</dbReference>
<dbReference type="GO" id="GO:0004197">
    <property type="term" value="F:cysteine-type endopeptidase activity"/>
    <property type="evidence" value="ECO:0000314"/>
    <property type="project" value="UniProtKB"/>
</dbReference>
<dbReference type="GO" id="GO:0006955">
    <property type="term" value="P:immune response"/>
    <property type="evidence" value="ECO:0000318"/>
    <property type="project" value="GO_Central"/>
</dbReference>
<dbReference type="GO" id="GO:2001235">
    <property type="term" value="P:positive regulation of apoptotic signaling pathway"/>
    <property type="evidence" value="ECO:0000318"/>
    <property type="project" value="GO_Central"/>
</dbReference>
<dbReference type="GO" id="GO:0051603">
    <property type="term" value="P:proteolysis involved in protein catabolic process"/>
    <property type="evidence" value="ECO:0000318"/>
    <property type="project" value="GO_Central"/>
</dbReference>
<dbReference type="CDD" id="cd02248">
    <property type="entry name" value="Peptidase_C1A"/>
    <property type="match status" value="1"/>
</dbReference>
<dbReference type="FunFam" id="3.90.70.10:FF:000039">
    <property type="entry name" value="Cysteine proteinase 2, putative"/>
    <property type="match status" value="1"/>
</dbReference>
<dbReference type="Gene3D" id="3.90.70.10">
    <property type="entry name" value="Cysteine proteinases"/>
    <property type="match status" value="1"/>
</dbReference>
<dbReference type="InterPro" id="IPR038765">
    <property type="entry name" value="Papain-like_cys_pep_sf"/>
</dbReference>
<dbReference type="InterPro" id="IPR025661">
    <property type="entry name" value="Pept_asp_AS"/>
</dbReference>
<dbReference type="InterPro" id="IPR000169">
    <property type="entry name" value="Pept_cys_AS"/>
</dbReference>
<dbReference type="InterPro" id="IPR025660">
    <property type="entry name" value="Pept_his_AS"/>
</dbReference>
<dbReference type="InterPro" id="IPR013128">
    <property type="entry name" value="Peptidase_C1A"/>
</dbReference>
<dbReference type="InterPro" id="IPR000668">
    <property type="entry name" value="Peptidase_C1A_C"/>
</dbReference>
<dbReference type="InterPro" id="IPR039417">
    <property type="entry name" value="Peptidase_C1A_papain-like"/>
</dbReference>
<dbReference type="InterPro" id="IPR013201">
    <property type="entry name" value="Prot_inhib_I29"/>
</dbReference>
<dbReference type="PANTHER" id="PTHR12411">
    <property type="entry name" value="CYSTEINE PROTEASE FAMILY C1-RELATED"/>
    <property type="match status" value="1"/>
</dbReference>
<dbReference type="Pfam" id="PF08246">
    <property type="entry name" value="Inhibitor_I29"/>
    <property type="match status" value="1"/>
</dbReference>
<dbReference type="Pfam" id="PF00112">
    <property type="entry name" value="Peptidase_C1"/>
    <property type="match status" value="1"/>
</dbReference>
<dbReference type="PRINTS" id="PR00705">
    <property type="entry name" value="PAPAIN"/>
</dbReference>
<dbReference type="SMART" id="SM00848">
    <property type="entry name" value="Inhibitor_I29"/>
    <property type="match status" value="1"/>
</dbReference>
<dbReference type="SMART" id="SM00645">
    <property type="entry name" value="Pept_C1"/>
    <property type="match status" value="1"/>
</dbReference>
<dbReference type="SUPFAM" id="SSF54001">
    <property type="entry name" value="Cysteine proteinases"/>
    <property type="match status" value="1"/>
</dbReference>
<dbReference type="PROSITE" id="PS00640">
    <property type="entry name" value="THIOL_PROTEASE_ASN"/>
    <property type="match status" value="1"/>
</dbReference>
<dbReference type="PROSITE" id="PS00139">
    <property type="entry name" value="THIOL_PROTEASE_CYS"/>
    <property type="match status" value="1"/>
</dbReference>
<dbReference type="PROSITE" id="PS00639">
    <property type="entry name" value="THIOL_PROTEASE_HIS"/>
    <property type="match status" value="1"/>
</dbReference>
<name>CPP1_ENTH1</name>
<protein>
    <recommendedName>
        <fullName evidence="9">Cysteine proteinase 1</fullName>
        <shortName evidence="12">EhCP1</shortName>
        <ecNumber evidence="6 8">3.4.22.-</ecNumber>
    </recommendedName>
</protein>
<reference evidence="13" key="1">
    <citation type="journal article" date="1992" name="Mol. Biochem. Parasitol.">
        <title>Mapping and partial sequencing of the genes coding for two different cysteine proteinases in pathogenic Entamoeba histolytica.</title>
        <authorList>
            <person name="Tannich E."/>
            <person name="Nickel R."/>
            <person name="Buss H."/>
            <person name="Horstmann R.D."/>
        </authorList>
    </citation>
    <scope>NUCLEOTIDE SEQUENCE [GENOMIC DNA]</scope>
    <scope>PARTIAL PROTEIN SEQUENCE</scope>
    <source>
        <strain evidence="13">ATCC 30459 / HM-1:IMSS / ABRM</strain>
    </source>
</reference>
<reference evidence="14" key="2">
    <citation type="journal article" date="1991" name="J. Biol. Chem.">
        <title>Homologous cysteine proteinases of pathogenic and nonpathogenic Entamoeba histolytica. Differences in structure and expression.</title>
        <authorList>
            <person name="Tannich E."/>
            <person name="Scholze H."/>
            <person name="Nicke R."/>
            <person name="Horstmann R.D."/>
        </authorList>
    </citation>
    <scope>NUCLEOTIDE SEQUENCE [MRNA] OF 4-315</scope>
    <source>
        <strain evidence="14">ATCC 30459 / HM-1:IMSS / ABRM</strain>
    </source>
</reference>
<reference evidence="15" key="3">
    <citation type="journal article" date="2005" name="Nature">
        <title>The genome of the protist parasite Entamoeba histolytica.</title>
        <authorList>
            <person name="Loftus B.J."/>
            <person name="Anderson I."/>
            <person name="Davies R."/>
            <person name="Alsmark U.C."/>
            <person name="Samuelson J."/>
            <person name="Amedeo P."/>
            <person name="Roncaglia P."/>
            <person name="Berriman M."/>
            <person name="Hirt R.P."/>
            <person name="Mann B.J."/>
            <person name="Nozaki T."/>
            <person name="Suh B."/>
            <person name="Pop M."/>
            <person name="Duchene M."/>
            <person name="Ackers J."/>
            <person name="Tannich E."/>
            <person name="Leippe M."/>
            <person name="Hofer M."/>
            <person name="Bruchhaus I."/>
            <person name="Willhoeft U."/>
            <person name="Bhattacharya A."/>
            <person name="Chillingworth T."/>
            <person name="Churcher C.M."/>
            <person name="Hance Z."/>
            <person name="Harris B."/>
            <person name="Harris D."/>
            <person name="Jagels K."/>
            <person name="Moule S."/>
            <person name="Mungall K.L."/>
            <person name="Ormond D."/>
            <person name="Squares R."/>
            <person name="Whitehead S."/>
            <person name="Quail M.A."/>
            <person name="Rabbinowitsch E."/>
            <person name="Norbertczak H."/>
            <person name="Price C."/>
            <person name="Wang Z."/>
            <person name="Guillen N."/>
            <person name="Gilchrist C."/>
            <person name="Stroup S.E."/>
            <person name="Bhattacharya S."/>
            <person name="Lohia A."/>
            <person name="Foster P.G."/>
            <person name="Sicheritz-Ponten T."/>
            <person name="Weber C."/>
            <person name="Singh U."/>
            <person name="Mukherjee C."/>
            <person name="El-Sayed N.M.A."/>
            <person name="Petri W.A."/>
            <person name="Clark C.G."/>
            <person name="Embley T.M."/>
            <person name="Barrell B.G."/>
            <person name="Fraser C.M."/>
            <person name="Hall N."/>
        </authorList>
    </citation>
    <scope>NUCLEOTIDE SEQUENCE [LARGE SCALE GENOMIC DNA]</scope>
    <source>
        <strain evidence="15">ATCC 30459 / HM-1:IMSS / ABRM</strain>
    </source>
</reference>
<reference key="4">
    <citation type="journal article" date="1989" name="J. Protozool.">
        <title>Action of the major protease from Entamoeba histolytica on proteins of the extracellular matrix.</title>
        <authorList>
            <person name="Schulte W."/>
            <person name="Scholze H."/>
        </authorList>
    </citation>
    <scope>PROTEIN SEQUENCE OF 94-99; 101-110 AND 112-113</scope>
    <scope>FUNCTION</scope>
    <scope>CATALYTIC ACTIVITY</scope>
    <source>
        <strain>ATCC 30459 / HM-1:IMSS / ABRM</strain>
    </source>
</reference>
<reference key="5">
    <citation type="journal article" date="2006" name="FEBS Lett.">
        <title>Two cysteine protease inhibitors, EhICP1 and 2, localized in distinct compartments, negatively regulate secretion in Entamoeba histolytica.</title>
        <authorList>
            <person name="Sato D."/>
            <person name="Nakada-Tsukui K."/>
            <person name="Okada M."/>
            <person name="Nozaki T."/>
        </authorList>
    </citation>
    <scope>CATALYTIC ACTIVITY</scope>
    <scope>ACTIVITY REGULATION</scope>
    <scope>DEVELOPMENTAL STAGE</scope>
</reference>
<reference key="6">
    <citation type="journal article" date="2012" name="Protist">
        <title>The cysteine protease inhibitors EhICP1 and EhICP2 perform different tasks in the regulation of endogenous protease activity in trophozoites of Entamoeba histolytica.</title>
        <authorList>
            <person name="Saric M."/>
            <person name="Irmer H."/>
            <person name="Eckert D."/>
            <person name="Baer A.K."/>
            <person name="Bruchhaus I."/>
            <person name="Scholze H."/>
        </authorList>
    </citation>
    <scope>SUBCELLULAR LOCATION</scope>
    <scope>DEVELOPMENTAL STAGE</scope>
</reference>
<comment type="function">
    <text evidence="8">Cysteine protease which degrades matrix proteins such as collagen, laminin and fibronectin and thus is involved in the destruction of human tissue (PubMed:2557443). Can abolish adhesion (PubMed:2557443). May play an important role in pathogenicity (PubMed:2557443).</text>
</comment>
<comment type="activity regulation">
    <text evidence="6">Inhibited by cysteine protease inhibitors ICP1 and ICP2.</text>
</comment>
<comment type="subcellular location">
    <subcellularLocation>
        <location evidence="7">Lysosome</location>
    </subcellularLocation>
</comment>
<comment type="developmental stage">
    <text evidence="6 7">Expressed in trophozoites (at protein level).</text>
</comment>
<comment type="similarity">
    <text evidence="3 4 5">Belongs to the peptidase C1 family.</text>
</comment>
<proteinExistence type="evidence at protein level"/>
<gene>
    <name evidence="12" type="primary">CP1</name>
    <name evidence="11" type="synonym">CP-A1</name>
    <name evidence="10" type="synonym">CPP</name>
    <name evidence="9" type="synonym">CPP1</name>
    <name evidence="15" type="ORF">EHI_074180</name>
</gene>
<keyword id="KW-0903">Direct protein sequencing</keyword>
<keyword id="KW-1015">Disulfide bond</keyword>
<keyword id="KW-0378">Hydrolase</keyword>
<keyword id="KW-0458">Lysosome</keyword>
<keyword id="KW-0645">Protease</keyword>
<keyword id="KW-1185">Reference proteome</keyword>
<keyword id="KW-0732">Signal</keyword>
<keyword id="KW-0788">Thiol protease</keyword>
<keyword id="KW-0865">Zymogen</keyword>
<accession>Q01957</accession>
<accession>C4M307</accession>
<evidence type="ECO:0000250" key="1">
    <source>
        <dbReference type="UniProtKB" id="P07711"/>
    </source>
</evidence>
<evidence type="ECO:0000255" key="2"/>
<evidence type="ECO:0000255" key="3">
    <source>
        <dbReference type="PROSITE-ProRule" id="PRU10088"/>
    </source>
</evidence>
<evidence type="ECO:0000255" key="4">
    <source>
        <dbReference type="PROSITE-ProRule" id="PRU10089"/>
    </source>
</evidence>
<evidence type="ECO:0000255" key="5">
    <source>
        <dbReference type="PROSITE-ProRule" id="PRU10090"/>
    </source>
</evidence>
<evidence type="ECO:0000269" key="6">
    <source>
    </source>
</evidence>
<evidence type="ECO:0000269" key="7">
    <source>
    </source>
</evidence>
<evidence type="ECO:0000269" key="8">
    <source>
    </source>
</evidence>
<evidence type="ECO:0000303" key="9">
    <source>
    </source>
</evidence>
<evidence type="ECO:0000303" key="10">
    <source>
    </source>
</evidence>
<evidence type="ECO:0000303" key="11">
    <source>
    </source>
</evidence>
<evidence type="ECO:0000305" key="12"/>
<evidence type="ECO:0000312" key="13">
    <source>
        <dbReference type="EMBL" id="AAA29090.1"/>
    </source>
</evidence>
<evidence type="ECO:0000312" key="14">
    <source>
        <dbReference type="EMBL" id="AAA29093.1"/>
    </source>
</evidence>
<evidence type="ECO:0000312" key="15">
    <source>
        <dbReference type="EMBL" id="EAL44770.2"/>
    </source>
</evidence>
<sequence length="315" mass="35083">MFTFILMFYIGYGIDFNTWVANNNKHFTAVESLRRRAIFNMNARIVAENNRKETFKLSVDGPFAAMTNEEYNSLLKLKRSGEEKGEVRYLNIQAPKAVDWRKKGKVTPIRDQGNCGSCYTFGSIAALEGRLLIEKGGDSETLDLSEEHMVQCTREDGNNGCNGGLGSNVYNYIMENGIAKESDYPYTGSDSTCRSDVKAFAKIKSYNRVARNNEVELKAAISQGLVDVSIDASSVQFQLYKSGAYTDKQCKNNYFALNHEVCAVGYGVVDGKECWIVRNSWGTGWGEKGYINMVIEGNTCGVATDPLYPTGVEYL</sequence>
<organism evidence="15">
    <name type="scientific">Entamoeba histolytica (strain ATCC 30459 / HM-1:IMSS / ABRM)</name>
    <dbReference type="NCBI Taxonomy" id="294381"/>
    <lineage>
        <taxon>Eukaryota</taxon>
        <taxon>Amoebozoa</taxon>
        <taxon>Evosea</taxon>
        <taxon>Archamoebae</taxon>
        <taxon>Mastigamoebida</taxon>
        <taxon>Entamoebidae</taxon>
        <taxon>Entamoeba</taxon>
    </lineage>
</organism>
<feature type="signal peptide" evidence="2">
    <location>
        <begin position="1"/>
        <end position="13"/>
    </location>
</feature>
<feature type="propeptide" id="PRO_0000026176" description="Activation peptide" evidence="8">
    <location>
        <begin position="14"/>
        <end position="93"/>
    </location>
</feature>
<feature type="chain" id="PRO_0000026177" description="Cysteine proteinase 1">
    <location>
        <begin position="94"/>
        <end position="315"/>
    </location>
</feature>
<feature type="active site" evidence="3">
    <location>
        <position position="118"/>
    </location>
</feature>
<feature type="active site" evidence="4">
    <location>
        <position position="259"/>
    </location>
</feature>
<feature type="active site" evidence="5">
    <location>
        <position position="279"/>
    </location>
</feature>
<feature type="disulfide bond" evidence="1">
    <location>
        <begin position="115"/>
        <end position="161"/>
    </location>
</feature>
<feature type="disulfide bond" evidence="1">
    <location>
        <begin position="152"/>
        <end position="193"/>
    </location>
</feature>
<feature type="sequence conflict" description="In Ref. 1; AAA29090 and 2; AAA29093." evidence="12" ref="1 2">
    <original>K</original>
    <variation>T</variation>
    <location>
        <position position="248"/>
    </location>
</feature>
<feature type="sequence conflict" description="In Ref. 2; AAA29093." evidence="12" ref="2">
    <original>V</original>
    <variation>A</variation>
    <location>
        <position position="269"/>
    </location>
</feature>